<evidence type="ECO:0000250" key="1">
    <source>
        <dbReference type="UniProtKB" id="Q1K8B6"/>
    </source>
</evidence>
<evidence type="ECO:0000255" key="2"/>
<evidence type="ECO:0000255" key="3">
    <source>
        <dbReference type="PROSITE-ProRule" id="PRU00498"/>
    </source>
</evidence>
<evidence type="ECO:0000256" key="4">
    <source>
        <dbReference type="SAM" id="MobiDB-lite"/>
    </source>
</evidence>
<evidence type="ECO:0000269" key="5">
    <source>
    </source>
</evidence>
<evidence type="ECO:0000269" key="6">
    <source>
    </source>
</evidence>
<evidence type="ECO:0000269" key="7">
    <source>
    </source>
</evidence>
<evidence type="ECO:0000269" key="8">
    <source>
    </source>
</evidence>
<evidence type="ECO:0000303" key="9">
    <source>
    </source>
</evidence>
<evidence type="ECO:0000305" key="10"/>
<evidence type="ECO:0000305" key="11">
    <source>
    </source>
</evidence>
<gene>
    <name evidence="9" type="primary">LPMO9D</name>
    <name type="ORF">AN3046</name>
    <name type="ORF">ANIA_03046</name>
</gene>
<accession>Q5B8T4</accession>
<accession>C8VIS7</accession>
<organism>
    <name type="scientific">Emericella nidulans (strain FGSC A4 / ATCC 38163 / CBS 112.46 / NRRL 194 / M139)</name>
    <name type="common">Aspergillus nidulans</name>
    <dbReference type="NCBI Taxonomy" id="227321"/>
    <lineage>
        <taxon>Eukaryota</taxon>
        <taxon>Fungi</taxon>
        <taxon>Dikarya</taxon>
        <taxon>Ascomycota</taxon>
        <taxon>Pezizomycotina</taxon>
        <taxon>Eurotiomycetes</taxon>
        <taxon>Eurotiomycetidae</taxon>
        <taxon>Eurotiales</taxon>
        <taxon>Aspergillaceae</taxon>
        <taxon>Aspergillus</taxon>
        <taxon>Aspergillus subgen. Nidulantes</taxon>
    </lineage>
</organism>
<comment type="function">
    <text evidence="6 11">Lytic polysaccharide monooxygenase (LPMO) that depolymerizes crystalline and amorphous polysaccharides via the oxidation of scissile alpha- or beta-(1-4)-glycosidic bonds, yielding C1 oxidation products (PubMed:27075737). Catalysis by LPMOs requires the reduction of the active-site copper from Cu(II) to Cu(I) by a reducing agent and H(2)O(2) or O(2) as a cosubstrate (Probable). Active on celluloseas as well as on the hemicellulose xyloglucan (PubMed:27075737). Shows synergy with other hydrolases in degrading sorghum stover (PubMed:27075737).</text>
</comment>
<comment type="catalytic activity">
    <reaction evidence="11">
        <text>[(1-&gt;4)-beta-D-glucosyl]n+m + reduced acceptor + O2 = 4-dehydro-beta-D-glucosyl-[(1-&gt;4)-beta-D-glucosyl]n-1 + [(1-&gt;4)-beta-D-glucosyl]m + acceptor + H2O.</text>
        <dbReference type="EC" id="1.14.99.56"/>
    </reaction>
</comment>
<comment type="cofactor">
    <cofactor evidence="1">
        <name>Cu(2+)</name>
        <dbReference type="ChEBI" id="CHEBI:29036"/>
    </cofactor>
    <text evidence="1">Binds 1 copper ion per subunit.</text>
</comment>
<comment type="subcellular location">
    <subcellularLocation>
        <location evidence="5 7 8">Secreted</location>
    </subcellularLocation>
</comment>
<comment type="induction">
    <text evidence="6 8">Expression is moderately induced by cellulose and xyloglucan (PubMed:27075737). Expression is induced on lignocellulosic substrates such as sugarcane straw (SCS) or steam-exploded sugarcane bagasse (SCB) (PubMed:35658600). The promoter contains the consensus sequence for xlnR binding sites (5'-GGCTAA/G-3') (PubMed:27075737). A cellulose response element (CeRE) 5'-CCTTAAAAGG-3' is also present at positions -799 to -790, as well as the degenerate binding motif 5'-SYGGRG-3' that binds to creA involved in carbon catabolite repression (PubMed:27075737).</text>
</comment>
<comment type="biotechnology">
    <text evidence="6">Lignocellulose is the most abundant polymeric composite on Earth and is a recalcitrant but promising renewable substrate for industrial biotechnology applications. Together with cellobiose dehydrogenases (CDHs) an enzymatic system capable of oxidative cellulose cleavage is formed, which increases the efficiency of cellulases and put LPMOs at focus of biofuel research.</text>
</comment>
<comment type="similarity">
    <text evidence="10">Belongs to the polysaccharide monooxygenase AA9 family.</text>
</comment>
<feature type="signal peptide" evidence="2">
    <location>
        <begin position="1"/>
        <end position="17"/>
    </location>
</feature>
<feature type="chain" id="PRO_5010197555" description="AA9 family lytic polysaccharide monooxygenase D">
    <location>
        <begin position="18"/>
        <end position="287"/>
    </location>
</feature>
<feature type="region of interest" description="Disordered" evidence="4">
    <location>
        <begin position="239"/>
        <end position="287"/>
    </location>
</feature>
<feature type="compositionally biased region" description="Basic and acidic residues" evidence="4">
    <location>
        <begin position="274"/>
        <end position="287"/>
    </location>
</feature>
<feature type="binding site" evidence="1">
    <location>
        <position position="18"/>
    </location>
    <ligand>
        <name>Cu(2+)</name>
        <dbReference type="ChEBI" id="CHEBI:29036"/>
        <note>catalytic</note>
    </ligand>
</feature>
<feature type="binding site" evidence="1">
    <location>
        <position position="176"/>
    </location>
    <ligand>
        <name>O2</name>
        <dbReference type="ChEBI" id="CHEBI:15379"/>
    </ligand>
</feature>
<feature type="binding site" evidence="1">
    <location>
        <position position="186"/>
    </location>
    <ligand>
        <name>Cu(2+)</name>
        <dbReference type="ChEBI" id="CHEBI:29036"/>
        <note>catalytic</note>
    </ligand>
</feature>
<feature type="glycosylation site" description="N-linked (GlcNAc...) asparagine" evidence="3">
    <location>
        <position position="220"/>
    </location>
</feature>
<feature type="glycosylation site" description="N-linked (GlcNAc...) asparagine" evidence="3">
    <location>
        <position position="250"/>
    </location>
</feature>
<feature type="disulfide bond" evidence="1">
    <location>
        <begin position="67"/>
        <end position="189"/>
    </location>
</feature>
<sequence length="287" mass="31717">MKLSLLAAAAIAPMVSAHYFFDTLVIDGQETTPNQYVRSNTRPEKYNPTKWVNTRDDMTPDMPDFRCNKGSFTFAGQTDTAEVKAGSKLAMKLGVGATMQHPGPGLVYMSKAPGAANQYEGDGDWFKIHEEGICDTSKDIKTDAWCTWDKDRIEFTIPADLPDGEYLIRSEHIGVHGAHDGQAEFYYECAQVKVTGGGNGNPQDTIKFPGGYQKDDPSFNFSVWGGMKDYPMPGPAVYTGGSGSSTGSYNESNAEDSNEYPYQKESGTCQSNFYRREHARDFSHRRA</sequence>
<keyword id="KW-0119">Carbohydrate metabolism</keyword>
<keyword id="KW-0136">Cellulose degradation</keyword>
<keyword id="KW-0186">Copper</keyword>
<keyword id="KW-1015">Disulfide bond</keyword>
<keyword id="KW-0325">Glycoprotein</keyword>
<keyword id="KW-0479">Metal-binding</keyword>
<keyword id="KW-0503">Monooxygenase</keyword>
<keyword id="KW-0560">Oxidoreductase</keyword>
<keyword id="KW-0624">Polysaccharide degradation</keyword>
<keyword id="KW-1185">Reference proteome</keyword>
<keyword id="KW-0964">Secreted</keyword>
<keyword id="KW-0732">Signal</keyword>
<name>LP9D_EMENI</name>
<reference key="1">
    <citation type="journal article" date="2005" name="Nature">
        <title>Sequencing of Aspergillus nidulans and comparative analysis with A. fumigatus and A. oryzae.</title>
        <authorList>
            <person name="Galagan J.E."/>
            <person name="Calvo S.E."/>
            <person name="Cuomo C."/>
            <person name="Ma L.-J."/>
            <person name="Wortman J.R."/>
            <person name="Batzoglou S."/>
            <person name="Lee S.-I."/>
            <person name="Bastuerkmen M."/>
            <person name="Spevak C.C."/>
            <person name="Clutterbuck J."/>
            <person name="Kapitonov V."/>
            <person name="Jurka J."/>
            <person name="Scazzocchio C."/>
            <person name="Farman M.L."/>
            <person name="Butler J."/>
            <person name="Purcell S."/>
            <person name="Harris S."/>
            <person name="Braus G.H."/>
            <person name="Draht O."/>
            <person name="Busch S."/>
            <person name="D'Enfert C."/>
            <person name="Bouchier C."/>
            <person name="Goldman G.H."/>
            <person name="Bell-Pedersen D."/>
            <person name="Griffiths-Jones S."/>
            <person name="Doonan J.H."/>
            <person name="Yu J."/>
            <person name="Vienken K."/>
            <person name="Pain A."/>
            <person name="Freitag M."/>
            <person name="Selker E.U."/>
            <person name="Archer D.B."/>
            <person name="Penalva M.A."/>
            <person name="Oakley B.R."/>
            <person name="Momany M."/>
            <person name="Tanaka T."/>
            <person name="Kumagai T."/>
            <person name="Asai K."/>
            <person name="Machida M."/>
            <person name="Nierman W.C."/>
            <person name="Denning D.W."/>
            <person name="Caddick M.X."/>
            <person name="Hynes M."/>
            <person name="Paoletti M."/>
            <person name="Fischer R."/>
            <person name="Miller B.L."/>
            <person name="Dyer P.S."/>
            <person name="Sachs M.S."/>
            <person name="Osmani S.A."/>
            <person name="Birren B.W."/>
        </authorList>
    </citation>
    <scope>NUCLEOTIDE SEQUENCE [LARGE SCALE GENOMIC DNA]</scope>
    <source>
        <strain>FGSC A4 / ATCC 38163 / CBS 112.46 / NRRL 194 / M139</strain>
    </source>
</reference>
<reference key="2">
    <citation type="journal article" date="2009" name="Fungal Genet. Biol.">
        <title>The 2008 update of the Aspergillus nidulans genome annotation: a community effort.</title>
        <authorList>
            <person name="Wortman J.R."/>
            <person name="Gilsenan J.M."/>
            <person name="Joardar V."/>
            <person name="Deegan J."/>
            <person name="Clutterbuck J."/>
            <person name="Andersen M.R."/>
            <person name="Archer D."/>
            <person name="Bencina M."/>
            <person name="Braus G."/>
            <person name="Coutinho P."/>
            <person name="von Dohren H."/>
            <person name="Doonan J."/>
            <person name="Driessen A.J."/>
            <person name="Durek P."/>
            <person name="Espeso E."/>
            <person name="Fekete E."/>
            <person name="Flipphi M."/>
            <person name="Estrada C.G."/>
            <person name="Geysens S."/>
            <person name="Goldman G."/>
            <person name="de Groot P.W."/>
            <person name="Hansen K."/>
            <person name="Harris S.D."/>
            <person name="Heinekamp T."/>
            <person name="Helmstaedt K."/>
            <person name="Henrissat B."/>
            <person name="Hofmann G."/>
            <person name="Homan T."/>
            <person name="Horio T."/>
            <person name="Horiuchi H."/>
            <person name="James S."/>
            <person name="Jones M."/>
            <person name="Karaffa L."/>
            <person name="Karanyi Z."/>
            <person name="Kato M."/>
            <person name="Keller N."/>
            <person name="Kelly D.E."/>
            <person name="Kiel J.A."/>
            <person name="Kim J.M."/>
            <person name="van der Klei I.J."/>
            <person name="Klis F.M."/>
            <person name="Kovalchuk A."/>
            <person name="Krasevec N."/>
            <person name="Kubicek C.P."/>
            <person name="Liu B."/>
            <person name="Maccabe A."/>
            <person name="Meyer V."/>
            <person name="Mirabito P."/>
            <person name="Miskei M."/>
            <person name="Mos M."/>
            <person name="Mullins J."/>
            <person name="Nelson D.R."/>
            <person name="Nielsen J."/>
            <person name="Oakley B.R."/>
            <person name="Osmani S.A."/>
            <person name="Pakula T."/>
            <person name="Paszewski A."/>
            <person name="Paulsen I."/>
            <person name="Pilsyk S."/>
            <person name="Pocsi I."/>
            <person name="Punt P.J."/>
            <person name="Ram A.F."/>
            <person name="Ren Q."/>
            <person name="Robellet X."/>
            <person name="Robson G."/>
            <person name="Seiboth B."/>
            <person name="van Solingen P."/>
            <person name="Specht T."/>
            <person name="Sun J."/>
            <person name="Taheri-Talesh N."/>
            <person name="Takeshita N."/>
            <person name="Ussery D."/>
            <person name="vanKuyk P.A."/>
            <person name="Visser H."/>
            <person name="van de Vondervoort P.J."/>
            <person name="de Vries R.P."/>
            <person name="Walton J."/>
            <person name="Xiang X."/>
            <person name="Xiong Y."/>
            <person name="Zeng A.P."/>
            <person name="Brandt B.W."/>
            <person name="Cornell M.J."/>
            <person name="van den Hondel C.A."/>
            <person name="Visser J."/>
            <person name="Oliver S.G."/>
            <person name="Turner G."/>
        </authorList>
    </citation>
    <scope>GENOME REANNOTATION</scope>
    <source>
        <strain>FGSC A4 / ATCC 38163 / CBS 112.46 / NRRL 194 / M139</strain>
    </source>
</reference>
<reference key="3">
    <citation type="journal article" date="2012" name="Biotechnol. Biofuels">
        <title>A time course analysis of the extracellular proteome of Aspergillus nidulans growing on sorghum stover.</title>
        <authorList>
            <person name="Saykhedkar S."/>
            <person name="Ray A."/>
            <person name="Ayoubi-Canaan P."/>
            <person name="Hartson S.D."/>
            <person name="Prade R."/>
            <person name="Mort A.J."/>
        </authorList>
    </citation>
    <scope>SUBCELLULAR LOCATION</scope>
</reference>
<reference key="4">
    <citation type="journal article" date="2016" name="Appl. Microbiol. Biotechnol.">
        <title>A family of AA9 lytic polysaccharide monooxygenases in Aspergillus nidulans is differentially regulated by multiple substrates and at least one is active on cellulose and xyloglucan.</title>
        <authorList>
            <person name="Jagadeeswaran G."/>
            <person name="Gainey L."/>
            <person name="Prade R."/>
            <person name="Mort A.J."/>
        </authorList>
    </citation>
    <scope>FUNCTION</scope>
    <scope>INDUCTION</scope>
    <scope>BIOTECHNOLOGY</scope>
</reference>
<reference key="5">
    <citation type="journal article" date="2016" name="Biotechnol. Biofuels">
        <title>Lytic polysaccharide monooxygenases and other oxidative enzymes are abundantly secreted by Aspergillus nidulans grown on different starches.</title>
        <authorList>
            <person name="Nekiunaite L."/>
            <person name="Arntzen M.O."/>
            <person name="Svensson B."/>
            <person name="Vaaje-Kolstad G."/>
            <person name="Abou Hachem M."/>
        </authorList>
    </citation>
    <scope>IDENTIFICATION</scope>
    <scope>SUBCELLULAR LOCATION</scope>
</reference>
<reference key="6">
    <citation type="journal article" date="2022" name="Microbiol. Spectr.">
        <title>Deletion of AA9 Lytic Polysaccharide Monooxygenases Impacts A. nidulans Secretome and Growth on Lignocellulose.</title>
        <authorList>
            <person name="Terrasan C.R.F."/>
            <person name="Rubio M.V."/>
            <person name="Gerhardt J.A."/>
            <person name="Cairo J.P.F."/>
            <person name="Contesini F.J."/>
            <person name="Zubieta M.P."/>
            <person name="Figueiredo F.L."/>
            <person name="Valadares F.L."/>
            <person name="Correa T.L.R."/>
            <person name="Murakami M.T."/>
            <person name="Franco T.T."/>
            <person name="Davies G.J."/>
            <person name="Walton P.H."/>
            <person name="Damasio A."/>
        </authorList>
    </citation>
    <scope>FUNCTION</scope>
    <scope>SUBCELLULAR LOCATION</scope>
    <scope>INDUCTION</scope>
</reference>
<protein>
    <recommendedName>
        <fullName evidence="9">AA9 family lytic polysaccharide monooxygenase D</fullName>
        <shortName evidence="9">LPMO9D</shortName>
        <ecNumber evidence="11">1.14.99.56</ecNumber>
    </recommendedName>
    <alternativeName>
        <fullName evidence="10">Cellulase LPMO9D</fullName>
    </alternativeName>
    <alternativeName>
        <fullName evidence="10">Endo-beta-1,4-glucanase LPMO9D</fullName>
        <shortName evidence="10">Endoglucanase LPMO9D</shortName>
    </alternativeName>
    <alternativeName>
        <fullName evidence="10">Glycosyl hydrolase 61 family protein LPMO9D</fullName>
    </alternativeName>
</protein>
<proteinExistence type="evidence at protein level"/>
<dbReference type="EC" id="1.14.99.56" evidence="11"/>
<dbReference type="EMBL" id="BN001306">
    <property type="protein sequence ID" value="CBF83507.1"/>
    <property type="molecule type" value="Genomic_DNA"/>
</dbReference>
<dbReference type="RefSeq" id="XP_660650.1">
    <property type="nucleotide sequence ID" value="XM_655558.1"/>
</dbReference>
<dbReference type="SMR" id="Q5B8T4"/>
<dbReference type="STRING" id="227321.Q5B8T4"/>
<dbReference type="CAZy" id="AA9">
    <property type="family name" value="Auxiliary Activities 9"/>
</dbReference>
<dbReference type="EnsemblFungi" id="CBF83507">
    <property type="protein sequence ID" value="CBF83507"/>
    <property type="gene ID" value="ANIA_03046"/>
</dbReference>
<dbReference type="GeneID" id="2874014"/>
<dbReference type="KEGG" id="ani:ANIA_03046"/>
<dbReference type="VEuPathDB" id="FungiDB:AN3046"/>
<dbReference type="eggNOG" id="ENOG502SING">
    <property type="taxonomic scope" value="Eukaryota"/>
</dbReference>
<dbReference type="HOGENOM" id="CLU_031730_4_0_1"/>
<dbReference type="InParanoid" id="Q5B8T4"/>
<dbReference type="OMA" id="YEEGICD"/>
<dbReference type="OrthoDB" id="3496539at2759"/>
<dbReference type="Proteomes" id="UP000000560">
    <property type="component" value="Chromosome VI"/>
</dbReference>
<dbReference type="GO" id="GO:0005576">
    <property type="term" value="C:extracellular region"/>
    <property type="evidence" value="ECO:0007669"/>
    <property type="project" value="UniProtKB-SubCell"/>
</dbReference>
<dbReference type="GO" id="GO:0046872">
    <property type="term" value="F:metal ion binding"/>
    <property type="evidence" value="ECO:0007669"/>
    <property type="project" value="UniProtKB-KW"/>
</dbReference>
<dbReference type="GO" id="GO:0004497">
    <property type="term" value="F:monooxygenase activity"/>
    <property type="evidence" value="ECO:0007669"/>
    <property type="project" value="UniProtKB-KW"/>
</dbReference>
<dbReference type="GO" id="GO:0030245">
    <property type="term" value="P:cellulose catabolic process"/>
    <property type="evidence" value="ECO:0007669"/>
    <property type="project" value="UniProtKB-KW"/>
</dbReference>
<dbReference type="CDD" id="cd21175">
    <property type="entry name" value="LPMO_AA9"/>
    <property type="match status" value="1"/>
</dbReference>
<dbReference type="Gene3D" id="2.70.50.70">
    <property type="match status" value="1"/>
</dbReference>
<dbReference type="InterPro" id="IPR049892">
    <property type="entry name" value="AA9"/>
</dbReference>
<dbReference type="InterPro" id="IPR005103">
    <property type="entry name" value="AA9_LPMO"/>
</dbReference>
<dbReference type="PANTHER" id="PTHR33353:SF2">
    <property type="entry name" value="ENDO-BETA-1,4-GLUCANASE D"/>
    <property type="match status" value="1"/>
</dbReference>
<dbReference type="PANTHER" id="PTHR33353">
    <property type="entry name" value="PUTATIVE (AFU_ORTHOLOGUE AFUA_1G12560)-RELATED"/>
    <property type="match status" value="1"/>
</dbReference>
<dbReference type="Pfam" id="PF03443">
    <property type="entry name" value="AA9"/>
    <property type="match status" value="1"/>
</dbReference>